<evidence type="ECO:0000255" key="1">
    <source>
        <dbReference type="HAMAP-Rule" id="MF_00144"/>
    </source>
</evidence>
<sequence>MSAQNLAPPLNTLDFDKKPEETRVVVAMSGGVDSSVVAGLLKQQGYDVLGITLQLYDHGAAVHRAGSCCAGQDIDDARRVCETLGIPHYVLDYEKRFRETVINPFAESYVAGETPIPCVSCNQTVKFADLLATAKELGADALATGHYIRSRPNPSPEHPGRRALFRPADADRDQSYFLFATTQEQIDYLRFPLGGLPKAETRRLAEEMGLVVAKKADSQDICFVPQGKYSDIITKLKPNAALAGEIVHLDGRVLGTHEGILHFTIGQRRGIGIATGEPLYVVYLDARSRRVIVGPKEALETHRVYLRDVNWLGDETLGEAASGEGFACYAKVRSTRAPAPAVLHVDATGTYVDLTVGEAGIAPGQACALYSAPGDDARVFGGGFIERSEREPAAEASLKALLASPVAA</sequence>
<name>MNMA_RHIE6</name>
<organism>
    <name type="scientific">Rhizobium etli (strain CIAT 652)</name>
    <dbReference type="NCBI Taxonomy" id="491916"/>
    <lineage>
        <taxon>Bacteria</taxon>
        <taxon>Pseudomonadati</taxon>
        <taxon>Pseudomonadota</taxon>
        <taxon>Alphaproteobacteria</taxon>
        <taxon>Hyphomicrobiales</taxon>
        <taxon>Rhizobiaceae</taxon>
        <taxon>Rhizobium/Agrobacterium group</taxon>
        <taxon>Rhizobium</taxon>
    </lineage>
</organism>
<accession>B3PYW4</accession>
<proteinExistence type="inferred from homology"/>
<protein>
    <recommendedName>
        <fullName evidence="1">tRNA-specific 2-thiouridylase MnmA</fullName>
        <ecNumber evidence="1">2.8.1.13</ecNumber>
    </recommendedName>
</protein>
<feature type="chain" id="PRO_1000096303" description="tRNA-specific 2-thiouridylase MnmA">
    <location>
        <begin position="1"/>
        <end position="408"/>
    </location>
</feature>
<feature type="region of interest" description="Interaction with tRNA" evidence="1">
    <location>
        <begin position="172"/>
        <end position="174"/>
    </location>
</feature>
<feature type="active site" description="Nucleophile" evidence="1">
    <location>
        <position position="121"/>
    </location>
</feature>
<feature type="active site" description="Cysteine persulfide intermediate" evidence="1">
    <location>
        <position position="222"/>
    </location>
</feature>
<feature type="binding site" evidence="1">
    <location>
        <begin position="27"/>
        <end position="34"/>
    </location>
    <ligand>
        <name>ATP</name>
        <dbReference type="ChEBI" id="CHEBI:30616"/>
    </ligand>
</feature>
<feature type="binding site" evidence="1">
    <location>
        <position position="53"/>
    </location>
    <ligand>
        <name>ATP</name>
        <dbReference type="ChEBI" id="CHEBI:30616"/>
    </ligand>
</feature>
<feature type="binding site" evidence="1">
    <location>
        <position position="145"/>
    </location>
    <ligand>
        <name>ATP</name>
        <dbReference type="ChEBI" id="CHEBI:30616"/>
    </ligand>
</feature>
<feature type="site" description="Interaction with tRNA" evidence="1">
    <location>
        <position position="146"/>
    </location>
</feature>
<feature type="site" description="Interaction with tRNA" evidence="1">
    <location>
        <position position="365"/>
    </location>
</feature>
<feature type="disulfide bond" description="Alternate" evidence="1">
    <location>
        <begin position="121"/>
        <end position="222"/>
    </location>
</feature>
<keyword id="KW-0067">ATP-binding</keyword>
<keyword id="KW-0963">Cytoplasm</keyword>
<keyword id="KW-1015">Disulfide bond</keyword>
<keyword id="KW-0547">Nucleotide-binding</keyword>
<keyword id="KW-0694">RNA-binding</keyword>
<keyword id="KW-0808">Transferase</keyword>
<keyword id="KW-0819">tRNA processing</keyword>
<keyword id="KW-0820">tRNA-binding</keyword>
<dbReference type="EC" id="2.8.1.13" evidence="1"/>
<dbReference type="EMBL" id="CP001074">
    <property type="protein sequence ID" value="ACE92628.1"/>
    <property type="molecule type" value="Genomic_DNA"/>
</dbReference>
<dbReference type="SMR" id="B3PYW4"/>
<dbReference type="KEGG" id="rec:RHECIAT_CH0003690"/>
<dbReference type="eggNOG" id="COG0482">
    <property type="taxonomic scope" value="Bacteria"/>
</dbReference>
<dbReference type="HOGENOM" id="CLU_035188_0_1_5"/>
<dbReference type="Proteomes" id="UP000008817">
    <property type="component" value="Chromosome"/>
</dbReference>
<dbReference type="GO" id="GO:0005737">
    <property type="term" value="C:cytoplasm"/>
    <property type="evidence" value="ECO:0007669"/>
    <property type="project" value="UniProtKB-SubCell"/>
</dbReference>
<dbReference type="GO" id="GO:0005524">
    <property type="term" value="F:ATP binding"/>
    <property type="evidence" value="ECO:0007669"/>
    <property type="project" value="UniProtKB-KW"/>
</dbReference>
<dbReference type="GO" id="GO:0000049">
    <property type="term" value="F:tRNA binding"/>
    <property type="evidence" value="ECO:0007669"/>
    <property type="project" value="UniProtKB-KW"/>
</dbReference>
<dbReference type="GO" id="GO:0103016">
    <property type="term" value="F:tRNA-uridine 2-sulfurtransferase activity"/>
    <property type="evidence" value="ECO:0007669"/>
    <property type="project" value="UniProtKB-EC"/>
</dbReference>
<dbReference type="GO" id="GO:0002143">
    <property type="term" value="P:tRNA wobble position uridine thiolation"/>
    <property type="evidence" value="ECO:0007669"/>
    <property type="project" value="TreeGrafter"/>
</dbReference>
<dbReference type="CDD" id="cd01998">
    <property type="entry name" value="MnmA_TRMU-like"/>
    <property type="match status" value="1"/>
</dbReference>
<dbReference type="FunFam" id="2.30.30.280:FF:000001">
    <property type="entry name" value="tRNA-specific 2-thiouridylase MnmA"/>
    <property type="match status" value="1"/>
</dbReference>
<dbReference type="FunFam" id="3.40.50.620:FF:000115">
    <property type="entry name" value="tRNA-specific 2-thiouridylase MnmA"/>
    <property type="match status" value="1"/>
</dbReference>
<dbReference type="Gene3D" id="2.30.30.280">
    <property type="entry name" value="Adenine nucleotide alpha hydrolases-like domains"/>
    <property type="match status" value="1"/>
</dbReference>
<dbReference type="Gene3D" id="3.40.50.620">
    <property type="entry name" value="HUPs"/>
    <property type="match status" value="1"/>
</dbReference>
<dbReference type="Gene3D" id="2.40.30.10">
    <property type="entry name" value="Translation factors"/>
    <property type="match status" value="1"/>
</dbReference>
<dbReference type="HAMAP" id="MF_00144">
    <property type="entry name" value="tRNA_thiouridyl_MnmA"/>
    <property type="match status" value="1"/>
</dbReference>
<dbReference type="InterPro" id="IPR004506">
    <property type="entry name" value="MnmA-like"/>
</dbReference>
<dbReference type="InterPro" id="IPR046885">
    <property type="entry name" value="MnmA-like_C"/>
</dbReference>
<dbReference type="InterPro" id="IPR046884">
    <property type="entry name" value="MnmA-like_central"/>
</dbReference>
<dbReference type="InterPro" id="IPR023382">
    <property type="entry name" value="MnmA-like_central_sf"/>
</dbReference>
<dbReference type="InterPro" id="IPR014729">
    <property type="entry name" value="Rossmann-like_a/b/a_fold"/>
</dbReference>
<dbReference type="NCBIfam" id="NF001138">
    <property type="entry name" value="PRK00143.1"/>
    <property type="match status" value="1"/>
</dbReference>
<dbReference type="NCBIfam" id="TIGR00420">
    <property type="entry name" value="trmU"/>
    <property type="match status" value="1"/>
</dbReference>
<dbReference type="PANTHER" id="PTHR11933:SF5">
    <property type="entry name" value="MITOCHONDRIAL TRNA-SPECIFIC 2-THIOURIDYLASE 1"/>
    <property type="match status" value="1"/>
</dbReference>
<dbReference type="PANTHER" id="PTHR11933">
    <property type="entry name" value="TRNA 5-METHYLAMINOMETHYL-2-THIOURIDYLATE -METHYLTRANSFERASE"/>
    <property type="match status" value="1"/>
</dbReference>
<dbReference type="Pfam" id="PF03054">
    <property type="entry name" value="tRNA_Me_trans"/>
    <property type="match status" value="1"/>
</dbReference>
<dbReference type="Pfam" id="PF20258">
    <property type="entry name" value="tRNA_Me_trans_C"/>
    <property type="match status" value="1"/>
</dbReference>
<dbReference type="Pfam" id="PF20259">
    <property type="entry name" value="tRNA_Me_trans_M"/>
    <property type="match status" value="1"/>
</dbReference>
<dbReference type="SUPFAM" id="SSF52402">
    <property type="entry name" value="Adenine nucleotide alpha hydrolases-like"/>
    <property type="match status" value="1"/>
</dbReference>
<comment type="function">
    <text evidence="1">Catalyzes the 2-thiolation of uridine at the wobble position (U34) of tRNA, leading to the formation of s(2)U34.</text>
</comment>
<comment type="catalytic activity">
    <reaction evidence="1">
        <text>S-sulfanyl-L-cysteinyl-[protein] + uridine(34) in tRNA + AH2 + ATP = 2-thiouridine(34) in tRNA + L-cysteinyl-[protein] + A + AMP + diphosphate + H(+)</text>
        <dbReference type="Rhea" id="RHEA:47032"/>
        <dbReference type="Rhea" id="RHEA-COMP:10131"/>
        <dbReference type="Rhea" id="RHEA-COMP:11726"/>
        <dbReference type="Rhea" id="RHEA-COMP:11727"/>
        <dbReference type="Rhea" id="RHEA-COMP:11728"/>
        <dbReference type="ChEBI" id="CHEBI:13193"/>
        <dbReference type="ChEBI" id="CHEBI:15378"/>
        <dbReference type="ChEBI" id="CHEBI:17499"/>
        <dbReference type="ChEBI" id="CHEBI:29950"/>
        <dbReference type="ChEBI" id="CHEBI:30616"/>
        <dbReference type="ChEBI" id="CHEBI:33019"/>
        <dbReference type="ChEBI" id="CHEBI:61963"/>
        <dbReference type="ChEBI" id="CHEBI:65315"/>
        <dbReference type="ChEBI" id="CHEBI:87170"/>
        <dbReference type="ChEBI" id="CHEBI:456215"/>
        <dbReference type="EC" id="2.8.1.13"/>
    </reaction>
</comment>
<comment type="subcellular location">
    <subcellularLocation>
        <location evidence="1">Cytoplasm</location>
    </subcellularLocation>
</comment>
<comment type="similarity">
    <text evidence="1">Belongs to the MnmA/TRMU family.</text>
</comment>
<reference key="1">
    <citation type="journal article" date="2010" name="Appl. Environ. Microbiol.">
        <title>Conserved symbiotic plasmid DNA sequences in the multireplicon pangenomic structure of Rhizobium etli.</title>
        <authorList>
            <person name="Gonzalez V."/>
            <person name="Acosta J.L."/>
            <person name="Santamaria R.I."/>
            <person name="Bustos P."/>
            <person name="Fernandez J.L."/>
            <person name="Hernandez Gonzalez I.L."/>
            <person name="Diaz R."/>
            <person name="Flores M."/>
            <person name="Palacios R."/>
            <person name="Mora J."/>
            <person name="Davila G."/>
        </authorList>
    </citation>
    <scope>NUCLEOTIDE SEQUENCE [LARGE SCALE GENOMIC DNA]</scope>
    <source>
        <strain>CIAT 652</strain>
    </source>
</reference>
<gene>
    <name evidence="1" type="primary">mnmA</name>
    <name type="ordered locus">RHECIAT_CH0003690</name>
</gene>